<proteinExistence type="inferred from homology"/>
<name>GLPK_SACI7</name>
<reference key="1">
    <citation type="journal article" date="2009" name="Proc. Natl. Acad. Sci. U.S.A.">
        <title>Biogeography of the Sulfolobus islandicus pan-genome.</title>
        <authorList>
            <person name="Reno M.L."/>
            <person name="Held N.L."/>
            <person name="Fields C.J."/>
            <person name="Burke P.V."/>
            <person name="Whitaker R.J."/>
        </authorList>
    </citation>
    <scope>NUCLEOTIDE SEQUENCE [LARGE SCALE GENOMIC DNA]</scope>
    <source>
        <strain>Y.G.57.14 / Yellowstone #1</strain>
    </source>
</reference>
<comment type="function">
    <text evidence="1">Key enzyme in the regulation of glycerol uptake and metabolism. Catalyzes the phosphorylation of glycerol to yield sn-glycerol 3-phosphate.</text>
</comment>
<comment type="catalytic activity">
    <reaction evidence="1">
        <text>glycerol + ATP = sn-glycerol 3-phosphate + ADP + H(+)</text>
        <dbReference type="Rhea" id="RHEA:21644"/>
        <dbReference type="ChEBI" id="CHEBI:15378"/>
        <dbReference type="ChEBI" id="CHEBI:17754"/>
        <dbReference type="ChEBI" id="CHEBI:30616"/>
        <dbReference type="ChEBI" id="CHEBI:57597"/>
        <dbReference type="ChEBI" id="CHEBI:456216"/>
        <dbReference type="EC" id="2.7.1.30"/>
    </reaction>
</comment>
<comment type="pathway">
    <text evidence="1">Polyol metabolism; glycerol degradation via glycerol kinase pathway; sn-glycerol 3-phosphate from glycerol: step 1/1.</text>
</comment>
<comment type="similarity">
    <text evidence="1">Belongs to the FGGY kinase family.</text>
</comment>
<organism>
    <name type="scientific">Saccharolobus islandicus (strain Y.G.57.14 / Yellowstone #1)</name>
    <name type="common">Sulfolobus islandicus</name>
    <dbReference type="NCBI Taxonomy" id="439386"/>
    <lineage>
        <taxon>Archaea</taxon>
        <taxon>Thermoproteota</taxon>
        <taxon>Thermoprotei</taxon>
        <taxon>Sulfolobales</taxon>
        <taxon>Sulfolobaceae</taxon>
        <taxon>Saccharolobus</taxon>
    </lineage>
</organism>
<evidence type="ECO:0000255" key="1">
    <source>
        <dbReference type="HAMAP-Rule" id="MF_00186"/>
    </source>
</evidence>
<dbReference type="EC" id="2.7.1.30" evidence="1"/>
<dbReference type="EMBL" id="CP001403">
    <property type="protein sequence ID" value="ACP44782.1"/>
    <property type="molecule type" value="Genomic_DNA"/>
</dbReference>
<dbReference type="RefSeq" id="WP_012713516.1">
    <property type="nucleotide sequence ID" value="NC_012622.1"/>
</dbReference>
<dbReference type="SMR" id="C3NAM2"/>
<dbReference type="GeneID" id="7806173"/>
<dbReference type="KEGG" id="siy:YG5714_0488"/>
<dbReference type="HOGENOM" id="CLU_009281_2_3_2"/>
<dbReference type="UniPathway" id="UPA00618">
    <property type="reaction ID" value="UER00672"/>
</dbReference>
<dbReference type="Proteomes" id="UP000002308">
    <property type="component" value="Chromosome"/>
</dbReference>
<dbReference type="GO" id="GO:0005829">
    <property type="term" value="C:cytosol"/>
    <property type="evidence" value="ECO:0007669"/>
    <property type="project" value="TreeGrafter"/>
</dbReference>
<dbReference type="GO" id="GO:0005524">
    <property type="term" value="F:ATP binding"/>
    <property type="evidence" value="ECO:0007669"/>
    <property type="project" value="UniProtKB-UniRule"/>
</dbReference>
<dbReference type="GO" id="GO:0004370">
    <property type="term" value="F:glycerol kinase activity"/>
    <property type="evidence" value="ECO:0000250"/>
    <property type="project" value="UniProtKB"/>
</dbReference>
<dbReference type="GO" id="GO:0019563">
    <property type="term" value="P:glycerol catabolic process"/>
    <property type="evidence" value="ECO:0007669"/>
    <property type="project" value="UniProtKB-UniRule"/>
</dbReference>
<dbReference type="GO" id="GO:0006071">
    <property type="term" value="P:glycerol metabolic process"/>
    <property type="evidence" value="ECO:0000250"/>
    <property type="project" value="UniProtKB"/>
</dbReference>
<dbReference type="GO" id="GO:0006072">
    <property type="term" value="P:glycerol-3-phosphate metabolic process"/>
    <property type="evidence" value="ECO:0007669"/>
    <property type="project" value="InterPro"/>
</dbReference>
<dbReference type="CDD" id="cd07786">
    <property type="entry name" value="FGGY_EcGK_like"/>
    <property type="match status" value="1"/>
</dbReference>
<dbReference type="FunFam" id="3.30.420.40:FF:000007">
    <property type="entry name" value="Glycerol kinase"/>
    <property type="match status" value="1"/>
</dbReference>
<dbReference type="FunFam" id="3.30.420.40:FF:000008">
    <property type="entry name" value="Glycerol kinase"/>
    <property type="match status" value="1"/>
</dbReference>
<dbReference type="Gene3D" id="3.30.420.40">
    <property type="match status" value="2"/>
</dbReference>
<dbReference type="HAMAP" id="MF_00186">
    <property type="entry name" value="Glycerol_kin"/>
    <property type="match status" value="1"/>
</dbReference>
<dbReference type="InterPro" id="IPR043129">
    <property type="entry name" value="ATPase_NBD"/>
</dbReference>
<dbReference type="InterPro" id="IPR000577">
    <property type="entry name" value="Carb_kinase_FGGY"/>
</dbReference>
<dbReference type="InterPro" id="IPR018483">
    <property type="entry name" value="Carb_kinase_FGGY_CS"/>
</dbReference>
<dbReference type="InterPro" id="IPR018485">
    <property type="entry name" value="FGGY_C"/>
</dbReference>
<dbReference type="InterPro" id="IPR018484">
    <property type="entry name" value="FGGY_N"/>
</dbReference>
<dbReference type="InterPro" id="IPR005999">
    <property type="entry name" value="Glycerol_kin"/>
</dbReference>
<dbReference type="NCBIfam" id="TIGR01311">
    <property type="entry name" value="glycerol_kin"/>
    <property type="match status" value="1"/>
</dbReference>
<dbReference type="NCBIfam" id="NF000756">
    <property type="entry name" value="PRK00047.1"/>
    <property type="match status" value="1"/>
</dbReference>
<dbReference type="PANTHER" id="PTHR10196:SF69">
    <property type="entry name" value="GLYCEROL KINASE"/>
    <property type="match status" value="1"/>
</dbReference>
<dbReference type="PANTHER" id="PTHR10196">
    <property type="entry name" value="SUGAR KINASE"/>
    <property type="match status" value="1"/>
</dbReference>
<dbReference type="Pfam" id="PF02782">
    <property type="entry name" value="FGGY_C"/>
    <property type="match status" value="1"/>
</dbReference>
<dbReference type="Pfam" id="PF00370">
    <property type="entry name" value="FGGY_N"/>
    <property type="match status" value="1"/>
</dbReference>
<dbReference type="PIRSF" id="PIRSF000538">
    <property type="entry name" value="GlpK"/>
    <property type="match status" value="1"/>
</dbReference>
<dbReference type="SUPFAM" id="SSF53067">
    <property type="entry name" value="Actin-like ATPase domain"/>
    <property type="match status" value="2"/>
</dbReference>
<dbReference type="PROSITE" id="PS00933">
    <property type="entry name" value="FGGY_KINASES_1"/>
    <property type="match status" value="1"/>
</dbReference>
<dbReference type="PROSITE" id="PS00445">
    <property type="entry name" value="FGGY_KINASES_2"/>
    <property type="match status" value="1"/>
</dbReference>
<accession>C3NAM2</accession>
<protein>
    <recommendedName>
        <fullName evidence="1">Glycerol kinase</fullName>
        <ecNumber evidence="1">2.7.1.30</ecNumber>
    </recommendedName>
    <alternativeName>
        <fullName evidence="1">ATP:glycerol 3-phosphotransferase</fullName>
    </alternativeName>
    <alternativeName>
        <fullName evidence="1">Glycerokinase</fullName>
        <shortName evidence="1">GK</shortName>
    </alternativeName>
</protein>
<keyword id="KW-0067">ATP-binding</keyword>
<keyword id="KW-0319">Glycerol metabolism</keyword>
<keyword id="KW-0418">Kinase</keyword>
<keyword id="KW-0547">Nucleotide-binding</keyword>
<keyword id="KW-0808">Transferase</keyword>
<sequence length="501" mass="55655">MNTMSHKFVLALDEGTTSARAILFDSDLNIVNIGQYEFPQHYPQPGYVEHDPEEIWEAQMLAVKKAISKIDAKQIVAIGITNQRETTVLWDAKSGKPVYNAIVWQDRRTSPITDWLKANYFKMIKDKTGLVPDPYFSASKIKWILDNVPNVREKAERGEIKFGTLDTYLIWRLTNGKAHVTDYSNASRTMLFNINKLECDREILELLKIPESILPEVKPSSEIYGYSEALGNLIPISGDAGDQQAALFGQVAFNVGEIKATYGTGSFILMNIGNNPIRSENLLTTIAWGLEKNKATYALEGSIFITGAAVQWFRDGLRAIDVSDEIEPLASNVEDNGGVYFVPAFVGLGAPYWDPYARGLIIGITRGTTKAHIARAILESMAYQTRDVIEVMQKESGISINSLKVDGGAAKDNLLMQFQADILGIKVIRPKVMETTSMGVAMLAGLGVGLWNSLEELRSIWKVDKEFIPSMSEEKRRALYSGWKEAVKRAMGWAKVVGGQV</sequence>
<feature type="chain" id="PRO_1000203964" description="Glycerol kinase">
    <location>
        <begin position="1"/>
        <end position="501"/>
    </location>
</feature>
<feature type="binding site" evidence="1">
    <location>
        <position position="16"/>
    </location>
    <ligand>
        <name>ADP</name>
        <dbReference type="ChEBI" id="CHEBI:456216"/>
    </ligand>
</feature>
<feature type="binding site" evidence="1">
    <location>
        <position position="16"/>
    </location>
    <ligand>
        <name>ATP</name>
        <dbReference type="ChEBI" id="CHEBI:30616"/>
    </ligand>
</feature>
<feature type="binding site" evidence="1">
    <location>
        <position position="16"/>
    </location>
    <ligand>
        <name>sn-glycerol 3-phosphate</name>
        <dbReference type="ChEBI" id="CHEBI:57597"/>
    </ligand>
</feature>
<feature type="binding site" evidence="1">
    <location>
        <position position="17"/>
    </location>
    <ligand>
        <name>ATP</name>
        <dbReference type="ChEBI" id="CHEBI:30616"/>
    </ligand>
</feature>
<feature type="binding site" evidence="1">
    <location>
        <position position="18"/>
    </location>
    <ligand>
        <name>ATP</name>
        <dbReference type="ChEBI" id="CHEBI:30616"/>
    </ligand>
</feature>
<feature type="binding site" evidence="1">
    <location>
        <position position="20"/>
    </location>
    <ligand>
        <name>ADP</name>
        <dbReference type="ChEBI" id="CHEBI:456216"/>
    </ligand>
</feature>
<feature type="binding site" evidence="1">
    <location>
        <position position="84"/>
    </location>
    <ligand>
        <name>glycerol</name>
        <dbReference type="ChEBI" id="CHEBI:17754"/>
    </ligand>
</feature>
<feature type="binding site" evidence="1">
    <location>
        <position position="84"/>
    </location>
    <ligand>
        <name>sn-glycerol 3-phosphate</name>
        <dbReference type="ChEBI" id="CHEBI:57597"/>
    </ligand>
</feature>
<feature type="binding site" evidence="1">
    <location>
        <position position="85"/>
    </location>
    <ligand>
        <name>glycerol</name>
        <dbReference type="ChEBI" id="CHEBI:17754"/>
    </ligand>
</feature>
<feature type="binding site" evidence="1">
    <location>
        <position position="85"/>
    </location>
    <ligand>
        <name>sn-glycerol 3-phosphate</name>
        <dbReference type="ChEBI" id="CHEBI:57597"/>
    </ligand>
</feature>
<feature type="binding site" evidence="1">
    <location>
        <position position="135"/>
    </location>
    <ligand>
        <name>glycerol</name>
        <dbReference type="ChEBI" id="CHEBI:17754"/>
    </ligand>
</feature>
<feature type="binding site" evidence="1">
    <location>
        <position position="135"/>
    </location>
    <ligand>
        <name>sn-glycerol 3-phosphate</name>
        <dbReference type="ChEBI" id="CHEBI:57597"/>
    </ligand>
</feature>
<feature type="binding site" evidence="1">
    <location>
        <position position="242"/>
    </location>
    <ligand>
        <name>glycerol</name>
        <dbReference type="ChEBI" id="CHEBI:17754"/>
    </ligand>
</feature>
<feature type="binding site" evidence="1">
    <location>
        <position position="242"/>
    </location>
    <ligand>
        <name>sn-glycerol 3-phosphate</name>
        <dbReference type="ChEBI" id="CHEBI:57597"/>
    </ligand>
</feature>
<feature type="binding site" evidence="1">
    <location>
        <position position="243"/>
    </location>
    <ligand>
        <name>glycerol</name>
        <dbReference type="ChEBI" id="CHEBI:17754"/>
    </ligand>
</feature>
<feature type="binding site" evidence="1">
    <location>
        <position position="264"/>
    </location>
    <ligand>
        <name>ADP</name>
        <dbReference type="ChEBI" id="CHEBI:456216"/>
    </ligand>
</feature>
<feature type="binding site" evidence="1">
    <location>
        <position position="264"/>
    </location>
    <ligand>
        <name>ATP</name>
        <dbReference type="ChEBI" id="CHEBI:30616"/>
    </ligand>
</feature>
<feature type="binding site" evidence="1">
    <location>
        <position position="307"/>
    </location>
    <ligand>
        <name>ADP</name>
        <dbReference type="ChEBI" id="CHEBI:456216"/>
    </ligand>
</feature>
<feature type="binding site" evidence="1">
    <location>
        <position position="307"/>
    </location>
    <ligand>
        <name>ATP</name>
        <dbReference type="ChEBI" id="CHEBI:30616"/>
    </ligand>
</feature>
<feature type="binding site" evidence="1">
    <location>
        <position position="311"/>
    </location>
    <ligand>
        <name>ATP</name>
        <dbReference type="ChEBI" id="CHEBI:30616"/>
    </ligand>
</feature>
<feature type="binding site" evidence="1">
    <location>
        <position position="408"/>
    </location>
    <ligand>
        <name>ADP</name>
        <dbReference type="ChEBI" id="CHEBI:456216"/>
    </ligand>
</feature>
<feature type="binding site" evidence="1">
    <location>
        <position position="408"/>
    </location>
    <ligand>
        <name>ATP</name>
        <dbReference type="ChEBI" id="CHEBI:30616"/>
    </ligand>
</feature>
<gene>
    <name evidence="1" type="primary">glpK</name>
    <name type="ordered locus">YG5714_0488</name>
</gene>